<keyword id="KW-0050">Antiport</keyword>
<keyword id="KW-0997">Cell inner membrane</keyword>
<keyword id="KW-1003">Cell membrane</keyword>
<keyword id="KW-0406">Ion transport</keyword>
<keyword id="KW-0472">Membrane</keyword>
<keyword id="KW-0915">Sodium</keyword>
<keyword id="KW-0739">Sodium transport</keyword>
<keyword id="KW-0812">Transmembrane</keyword>
<keyword id="KW-1133">Transmembrane helix</keyword>
<keyword id="KW-0813">Transport</keyword>
<sequence>MDITIRQAVLRNFLGNSPDWYKLAIIAFLIINPLVFFFVSPFVAGWMLVIEFIFTLAMALKCYPLQPGGLLAIQAVAIGMTSPHQVAEEIANNLEVLLLLIFMVAGIYFMKQLLLFIFTKLLLSIRSKITLSLAFCVASAFLSAFLDALTVIAVVISVSVGFYTIYHHVASNHSDKDINDDSWIDSQENRKTLEQFRAFLRSLMMHAGVGTALGGVMTMVGEPQNLIIAKSAGWHFGDFFMRMLPVTLPVLCCGLLVCILLERFKLFGYGAVLPERVRQVLTDYDKQASAKRNRQEKVKLLVQALIGVWLVIALALHLAEVGLVGLSVIILATSFCGITNEHALGKAFQEALPFTALLTVFFAVVAVIIEQSLFTPIIQFVLQSSPSAQLSLFYLFNGLLSSVSDNVFVGTVYINEARKAFELGVISLQQFELLAVAINTGTNLPSVATPNGQAAFLFLLTSALAPLIRLSYGRMVYMALPYTIVMTGVGLLGVEYLLVPVTEWMIQSGWISLPHIAAGVSITH</sequence>
<dbReference type="EMBL" id="AM286415">
    <property type="protein sequence ID" value="CAL12344.1"/>
    <property type="molecule type" value="Genomic_DNA"/>
</dbReference>
<dbReference type="RefSeq" id="WP_011816442.1">
    <property type="nucleotide sequence ID" value="NC_008800.1"/>
</dbReference>
<dbReference type="RefSeq" id="YP_001006512.1">
    <property type="nucleotide sequence ID" value="NC_008800.1"/>
</dbReference>
<dbReference type="SMR" id="A1JQP8"/>
<dbReference type="KEGG" id="yen:YE2284"/>
<dbReference type="PATRIC" id="fig|393305.7.peg.2446"/>
<dbReference type="eggNOG" id="COG3067">
    <property type="taxonomic scope" value="Bacteria"/>
</dbReference>
<dbReference type="HOGENOM" id="CLU_041110_0_0_6"/>
<dbReference type="OrthoDB" id="5288732at2"/>
<dbReference type="Proteomes" id="UP000000642">
    <property type="component" value="Chromosome"/>
</dbReference>
<dbReference type="GO" id="GO:0005886">
    <property type="term" value="C:plasma membrane"/>
    <property type="evidence" value="ECO:0007669"/>
    <property type="project" value="UniProtKB-SubCell"/>
</dbReference>
<dbReference type="GO" id="GO:0015385">
    <property type="term" value="F:sodium:proton antiporter activity"/>
    <property type="evidence" value="ECO:0007669"/>
    <property type="project" value="InterPro"/>
</dbReference>
<dbReference type="HAMAP" id="MF_01599">
    <property type="entry name" value="NhaB"/>
    <property type="match status" value="1"/>
</dbReference>
<dbReference type="InterPro" id="IPR004671">
    <property type="entry name" value="Na+/H+_antiporter_NhaB"/>
</dbReference>
<dbReference type="NCBIfam" id="TIGR00774">
    <property type="entry name" value="NhaB"/>
    <property type="match status" value="1"/>
</dbReference>
<dbReference type="NCBIfam" id="NF007093">
    <property type="entry name" value="PRK09547.1"/>
    <property type="match status" value="1"/>
</dbReference>
<dbReference type="PANTHER" id="PTHR43302:SF1">
    <property type="entry name" value="NA(+)_H(+) ANTIPORTER NHAB"/>
    <property type="match status" value="1"/>
</dbReference>
<dbReference type="PANTHER" id="PTHR43302">
    <property type="entry name" value="TRANSPORTER ARSB-RELATED"/>
    <property type="match status" value="1"/>
</dbReference>
<dbReference type="Pfam" id="PF06450">
    <property type="entry name" value="NhaB"/>
    <property type="match status" value="1"/>
</dbReference>
<feature type="chain" id="PRO_0000333152" description="Na(+)/H(+) antiporter NhaB">
    <location>
        <begin position="1"/>
        <end position="524"/>
    </location>
</feature>
<feature type="transmembrane region" description="Helical" evidence="1">
    <location>
        <begin position="23"/>
        <end position="43"/>
    </location>
</feature>
<feature type="transmembrane region" description="Helical" evidence="1">
    <location>
        <begin position="45"/>
        <end position="65"/>
    </location>
</feature>
<feature type="transmembrane region" description="Helical" evidence="1">
    <location>
        <begin position="98"/>
        <end position="118"/>
    </location>
</feature>
<feature type="transmembrane region" description="Helical" evidence="1">
    <location>
        <begin position="136"/>
        <end position="156"/>
    </location>
</feature>
<feature type="transmembrane region" description="Helical" evidence="1">
    <location>
        <begin position="203"/>
        <end position="223"/>
    </location>
</feature>
<feature type="transmembrane region" description="Helical" evidence="1">
    <location>
        <begin position="239"/>
        <end position="259"/>
    </location>
</feature>
<feature type="transmembrane region" description="Helical" evidence="1">
    <location>
        <begin position="304"/>
        <end position="324"/>
    </location>
</feature>
<feature type="transmembrane region" description="Helical" evidence="1">
    <location>
        <begin position="325"/>
        <end position="345"/>
    </location>
</feature>
<feature type="transmembrane region" description="Helical" evidence="1">
    <location>
        <begin position="358"/>
        <end position="378"/>
    </location>
</feature>
<feature type="transmembrane region" description="Helical" evidence="1">
    <location>
        <begin position="392"/>
        <end position="412"/>
    </location>
</feature>
<feature type="transmembrane region" description="Helical" evidence="1">
    <location>
        <begin position="420"/>
        <end position="440"/>
    </location>
</feature>
<feature type="transmembrane region" description="Helical" evidence="1">
    <location>
        <begin position="448"/>
        <end position="468"/>
    </location>
</feature>
<feature type="transmembrane region" description="Helical" evidence="1">
    <location>
        <begin position="479"/>
        <end position="499"/>
    </location>
</feature>
<comment type="function">
    <text evidence="1">Na(+)/H(+) antiporter that extrudes sodium in exchange for external protons.</text>
</comment>
<comment type="catalytic activity">
    <reaction evidence="1">
        <text>2 Na(+)(in) + 3 H(+)(out) = 2 Na(+)(out) + 3 H(+)(in)</text>
        <dbReference type="Rhea" id="RHEA:29247"/>
        <dbReference type="ChEBI" id="CHEBI:15378"/>
        <dbReference type="ChEBI" id="CHEBI:29101"/>
    </reaction>
    <physiologicalReaction direction="left-to-right" evidence="1">
        <dbReference type="Rhea" id="RHEA:29248"/>
    </physiologicalReaction>
</comment>
<comment type="subcellular location">
    <subcellularLocation>
        <location evidence="1">Cell inner membrane</location>
        <topology evidence="1">Multi-pass membrane protein</topology>
    </subcellularLocation>
</comment>
<comment type="similarity">
    <text evidence="1">Belongs to the NhaB Na(+)/H(+) (TC 2.A.34) antiporter family.</text>
</comment>
<name>NHAB_YERE8</name>
<protein>
    <recommendedName>
        <fullName evidence="1">Na(+)/H(+) antiporter NhaB</fullName>
    </recommendedName>
    <alternativeName>
        <fullName evidence="1">Sodium/proton antiporter NhaB</fullName>
    </alternativeName>
</protein>
<gene>
    <name evidence="1" type="primary">nhaB</name>
    <name type="ordered locus">YE2284</name>
</gene>
<organism>
    <name type="scientific">Yersinia enterocolitica serotype O:8 / biotype 1B (strain NCTC 13174 / 8081)</name>
    <dbReference type="NCBI Taxonomy" id="393305"/>
    <lineage>
        <taxon>Bacteria</taxon>
        <taxon>Pseudomonadati</taxon>
        <taxon>Pseudomonadota</taxon>
        <taxon>Gammaproteobacteria</taxon>
        <taxon>Enterobacterales</taxon>
        <taxon>Yersiniaceae</taxon>
        <taxon>Yersinia</taxon>
    </lineage>
</organism>
<reference key="1">
    <citation type="journal article" date="2006" name="PLoS Genet.">
        <title>The complete genome sequence and comparative genome analysis of the high pathogenicity Yersinia enterocolitica strain 8081.</title>
        <authorList>
            <person name="Thomson N.R."/>
            <person name="Howard S."/>
            <person name="Wren B.W."/>
            <person name="Holden M.T.G."/>
            <person name="Crossman L."/>
            <person name="Challis G.L."/>
            <person name="Churcher C."/>
            <person name="Mungall K."/>
            <person name="Brooks K."/>
            <person name="Chillingworth T."/>
            <person name="Feltwell T."/>
            <person name="Abdellah Z."/>
            <person name="Hauser H."/>
            <person name="Jagels K."/>
            <person name="Maddison M."/>
            <person name="Moule S."/>
            <person name="Sanders M."/>
            <person name="Whitehead S."/>
            <person name="Quail M.A."/>
            <person name="Dougan G."/>
            <person name="Parkhill J."/>
            <person name="Prentice M.B."/>
        </authorList>
    </citation>
    <scope>NUCLEOTIDE SEQUENCE [LARGE SCALE GENOMIC DNA]</scope>
    <source>
        <strain>NCTC 13174 / 8081</strain>
    </source>
</reference>
<evidence type="ECO:0000255" key="1">
    <source>
        <dbReference type="HAMAP-Rule" id="MF_01599"/>
    </source>
</evidence>
<proteinExistence type="inferred from homology"/>
<accession>A1JQP8</accession>